<accession>Q6NAM5</accession>
<comment type="function">
    <text evidence="1">Transfers the gamma-phosphate of ATP to the 4'-position of a tetraacyldisaccharide 1-phosphate intermediate (termed DS-1-P) to form tetraacyldisaccharide 1,4'-bis-phosphate (lipid IVA).</text>
</comment>
<comment type="catalytic activity">
    <reaction evidence="1">
        <text>a lipid A disaccharide + ATP = a lipid IVA + ADP + H(+)</text>
        <dbReference type="Rhea" id="RHEA:67840"/>
        <dbReference type="ChEBI" id="CHEBI:15378"/>
        <dbReference type="ChEBI" id="CHEBI:30616"/>
        <dbReference type="ChEBI" id="CHEBI:176343"/>
        <dbReference type="ChEBI" id="CHEBI:176425"/>
        <dbReference type="ChEBI" id="CHEBI:456216"/>
        <dbReference type="EC" id="2.7.1.130"/>
    </reaction>
</comment>
<comment type="pathway">
    <text evidence="1">Glycolipid biosynthesis; lipid IV(A) biosynthesis; lipid IV(A) from (3R)-3-hydroxytetradecanoyl-[acyl-carrier-protein] and UDP-N-acetyl-alpha-D-glucosamine: step 6/6.</text>
</comment>
<comment type="similarity">
    <text evidence="1">Belongs to the LpxK family.</text>
</comment>
<gene>
    <name evidence="1" type="primary">lpxK</name>
    <name type="ordered locus">RPA1159</name>
</gene>
<organism>
    <name type="scientific">Rhodopseudomonas palustris (strain ATCC BAA-98 / CGA009)</name>
    <dbReference type="NCBI Taxonomy" id="258594"/>
    <lineage>
        <taxon>Bacteria</taxon>
        <taxon>Pseudomonadati</taxon>
        <taxon>Pseudomonadota</taxon>
        <taxon>Alphaproteobacteria</taxon>
        <taxon>Hyphomicrobiales</taxon>
        <taxon>Nitrobacteraceae</taxon>
        <taxon>Rhodopseudomonas</taxon>
    </lineage>
</organism>
<keyword id="KW-0067">ATP-binding</keyword>
<keyword id="KW-0418">Kinase</keyword>
<keyword id="KW-0441">Lipid A biosynthesis</keyword>
<keyword id="KW-0444">Lipid biosynthesis</keyword>
<keyword id="KW-0443">Lipid metabolism</keyword>
<keyword id="KW-0547">Nucleotide-binding</keyword>
<keyword id="KW-0808">Transferase</keyword>
<sequence>MREPGFWHRPPSLVSRLLLPIAAIYGNIAAARMQKAGTTVGVPVLCVGNYHMGGAGKTPTTLALVALLREFGETPVVLSRGYGGRLQGPVQVDPSRHSAADIGDEPLMMARRVPVVVARDRTDGAALACALGATVILMDDGFQNPALTKDASLIVVDSHRSIGNGSVFPAGPLRAPLPLQVARTDALVVVGDGTAADGLAQQITTKGGVVLRARLVPEPASVEALRGRRVLAFAGIGDPARFVATLRDSGVEVVEQRAFADHHPFTAEELAELAAAAKRDGLTLVTTEKDLARIGGAQQALGVEIVPFAVTLAFGDEAKLRLFLLDRLNGARAAKLAGRR</sequence>
<reference key="1">
    <citation type="journal article" date="2004" name="Nat. Biotechnol.">
        <title>Complete genome sequence of the metabolically versatile photosynthetic bacterium Rhodopseudomonas palustris.</title>
        <authorList>
            <person name="Larimer F.W."/>
            <person name="Chain P."/>
            <person name="Hauser L."/>
            <person name="Lamerdin J.E."/>
            <person name="Malfatti S."/>
            <person name="Do L."/>
            <person name="Land M.L."/>
            <person name="Pelletier D.A."/>
            <person name="Beatty J.T."/>
            <person name="Lang A.S."/>
            <person name="Tabita F.R."/>
            <person name="Gibson J.L."/>
            <person name="Hanson T.E."/>
            <person name="Bobst C."/>
            <person name="Torres y Torres J.L."/>
            <person name="Peres C."/>
            <person name="Harrison F.H."/>
            <person name="Gibson J."/>
            <person name="Harwood C.S."/>
        </authorList>
    </citation>
    <scope>NUCLEOTIDE SEQUENCE [LARGE SCALE GENOMIC DNA]</scope>
    <source>
        <strain>ATCC BAA-98 / CGA009</strain>
    </source>
</reference>
<proteinExistence type="inferred from homology"/>
<name>LPXK_RHOPA</name>
<feature type="chain" id="PRO_0000190943" description="Tetraacyldisaccharide 4'-kinase">
    <location>
        <begin position="1"/>
        <end position="340"/>
    </location>
</feature>
<feature type="binding site" evidence="1">
    <location>
        <begin position="51"/>
        <end position="58"/>
    </location>
    <ligand>
        <name>ATP</name>
        <dbReference type="ChEBI" id="CHEBI:30616"/>
    </ligand>
</feature>
<dbReference type="EC" id="2.7.1.130" evidence="1"/>
<dbReference type="EMBL" id="BX572596">
    <property type="protein sequence ID" value="CAE26602.1"/>
    <property type="molecule type" value="Genomic_DNA"/>
</dbReference>
<dbReference type="RefSeq" id="WP_011156723.1">
    <property type="nucleotide sequence ID" value="NZ_CP116810.1"/>
</dbReference>
<dbReference type="SMR" id="Q6NAM5"/>
<dbReference type="STRING" id="258594.RPA1159"/>
<dbReference type="GeneID" id="66892180"/>
<dbReference type="eggNOG" id="COG1663">
    <property type="taxonomic scope" value="Bacteria"/>
</dbReference>
<dbReference type="HOGENOM" id="CLU_038816_0_0_5"/>
<dbReference type="PhylomeDB" id="Q6NAM5"/>
<dbReference type="UniPathway" id="UPA00359">
    <property type="reaction ID" value="UER00482"/>
</dbReference>
<dbReference type="GO" id="GO:0005886">
    <property type="term" value="C:plasma membrane"/>
    <property type="evidence" value="ECO:0007669"/>
    <property type="project" value="TreeGrafter"/>
</dbReference>
<dbReference type="GO" id="GO:0005524">
    <property type="term" value="F:ATP binding"/>
    <property type="evidence" value="ECO:0007669"/>
    <property type="project" value="UniProtKB-UniRule"/>
</dbReference>
<dbReference type="GO" id="GO:0009029">
    <property type="term" value="F:tetraacyldisaccharide 4'-kinase activity"/>
    <property type="evidence" value="ECO:0007669"/>
    <property type="project" value="UniProtKB-UniRule"/>
</dbReference>
<dbReference type="GO" id="GO:0009245">
    <property type="term" value="P:lipid A biosynthetic process"/>
    <property type="evidence" value="ECO:0007669"/>
    <property type="project" value="UniProtKB-UniRule"/>
</dbReference>
<dbReference type="GO" id="GO:0009244">
    <property type="term" value="P:lipopolysaccharide core region biosynthetic process"/>
    <property type="evidence" value="ECO:0007669"/>
    <property type="project" value="TreeGrafter"/>
</dbReference>
<dbReference type="HAMAP" id="MF_00409">
    <property type="entry name" value="LpxK"/>
    <property type="match status" value="1"/>
</dbReference>
<dbReference type="InterPro" id="IPR003758">
    <property type="entry name" value="LpxK"/>
</dbReference>
<dbReference type="InterPro" id="IPR027417">
    <property type="entry name" value="P-loop_NTPase"/>
</dbReference>
<dbReference type="NCBIfam" id="TIGR00682">
    <property type="entry name" value="lpxK"/>
    <property type="match status" value="1"/>
</dbReference>
<dbReference type="PANTHER" id="PTHR42724">
    <property type="entry name" value="TETRAACYLDISACCHARIDE 4'-KINASE"/>
    <property type="match status" value="1"/>
</dbReference>
<dbReference type="PANTHER" id="PTHR42724:SF1">
    <property type="entry name" value="TETRAACYLDISACCHARIDE 4'-KINASE, MITOCHONDRIAL-RELATED"/>
    <property type="match status" value="1"/>
</dbReference>
<dbReference type="Pfam" id="PF02606">
    <property type="entry name" value="LpxK"/>
    <property type="match status" value="1"/>
</dbReference>
<dbReference type="SUPFAM" id="SSF52540">
    <property type="entry name" value="P-loop containing nucleoside triphosphate hydrolases"/>
    <property type="match status" value="1"/>
</dbReference>
<protein>
    <recommendedName>
        <fullName evidence="1">Tetraacyldisaccharide 4'-kinase</fullName>
        <ecNumber evidence="1">2.7.1.130</ecNumber>
    </recommendedName>
    <alternativeName>
        <fullName evidence="1">Lipid A 4'-kinase</fullName>
    </alternativeName>
</protein>
<evidence type="ECO:0000255" key="1">
    <source>
        <dbReference type="HAMAP-Rule" id="MF_00409"/>
    </source>
</evidence>